<comment type="function">
    <text evidence="1">Part of the Sec protein translocase complex. Interacts with the SecYEG preprotein conducting channel. Has a central role in coupling the hydrolysis of ATP to the transfer of proteins into and across the cell membrane, serving both as a receptor for the preprotein-SecB complex and as an ATP-driven molecular motor driving the stepwise translocation of polypeptide chains across the membrane.</text>
</comment>
<comment type="catalytic activity">
    <reaction evidence="1">
        <text>ATP + H2O + cellular proteinSide 1 = ADP + phosphate + cellular proteinSide 2.</text>
        <dbReference type="EC" id="7.4.2.8"/>
    </reaction>
</comment>
<comment type="cofactor">
    <cofactor evidence="1">
        <name>Zn(2+)</name>
        <dbReference type="ChEBI" id="CHEBI:29105"/>
    </cofactor>
    <text evidence="1">May bind 1 zinc ion per subunit.</text>
</comment>
<comment type="subunit">
    <text evidence="1">Monomer and homodimer. Part of the essential Sec protein translocation apparatus which comprises SecA, SecYEG and auxiliary proteins SecDF-YajC and YidC.</text>
</comment>
<comment type="subcellular location">
    <subcellularLocation>
        <location evidence="1">Cell inner membrane</location>
        <topology evidence="1">Peripheral membrane protein</topology>
        <orientation evidence="1">Cytoplasmic side</orientation>
    </subcellularLocation>
    <subcellularLocation>
        <location evidence="1">Cytoplasm</location>
    </subcellularLocation>
    <text evidence="1">Distribution is 50-50.</text>
</comment>
<comment type="similarity">
    <text evidence="1">Belongs to the SecA family.</text>
</comment>
<protein>
    <recommendedName>
        <fullName evidence="1">Protein translocase subunit SecA</fullName>
        <ecNumber evidence="1">7.4.2.8</ecNumber>
    </recommendedName>
</protein>
<feature type="chain" id="PRO_0000320968" description="Protein translocase subunit SecA">
    <location>
        <begin position="1"/>
        <end position="946"/>
    </location>
</feature>
<feature type="region of interest" description="Disordered" evidence="2">
    <location>
        <begin position="904"/>
        <end position="933"/>
    </location>
</feature>
<feature type="binding site" evidence="1">
    <location>
        <position position="87"/>
    </location>
    <ligand>
        <name>ATP</name>
        <dbReference type="ChEBI" id="CHEBI:30616"/>
    </ligand>
</feature>
<feature type="binding site" evidence="1">
    <location>
        <begin position="105"/>
        <end position="109"/>
    </location>
    <ligand>
        <name>ATP</name>
        <dbReference type="ChEBI" id="CHEBI:30616"/>
    </ligand>
</feature>
<feature type="binding site" evidence="1">
    <location>
        <position position="524"/>
    </location>
    <ligand>
        <name>ATP</name>
        <dbReference type="ChEBI" id="CHEBI:30616"/>
    </ligand>
</feature>
<feature type="binding site" evidence="1">
    <location>
        <position position="930"/>
    </location>
    <ligand>
        <name>Zn(2+)</name>
        <dbReference type="ChEBI" id="CHEBI:29105"/>
    </ligand>
</feature>
<feature type="binding site" evidence="1">
    <location>
        <position position="932"/>
    </location>
    <ligand>
        <name>Zn(2+)</name>
        <dbReference type="ChEBI" id="CHEBI:29105"/>
    </ligand>
</feature>
<feature type="binding site" evidence="1">
    <location>
        <position position="941"/>
    </location>
    <ligand>
        <name>Zn(2+)</name>
        <dbReference type="ChEBI" id="CHEBI:29105"/>
    </ligand>
</feature>
<feature type="binding site" evidence="1">
    <location>
        <position position="942"/>
    </location>
    <ligand>
        <name>Zn(2+)</name>
        <dbReference type="ChEBI" id="CHEBI:29105"/>
    </ligand>
</feature>
<reference key="1">
    <citation type="journal article" date="2004" name="Nat. Biotechnol.">
        <title>Complete genome sequence of the metabolically versatile photosynthetic bacterium Rhodopseudomonas palustris.</title>
        <authorList>
            <person name="Larimer F.W."/>
            <person name="Chain P."/>
            <person name="Hauser L."/>
            <person name="Lamerdin J.E."/>
            <person name="Malfatti S."/>
            <person name="Do L."/>
            <person name="Land M.L."/>
            <person name="Pelletier D.A."/>
            <person name="Beatty J.T."/>
            <person name="Lang A.S."/>
            <person name="Tabita F.R."/>
            <person name="Gibson J.L."/>
            <person name="Hanson T.E."/>
            <person name="Bobst C."/>
            <person name="Torres y Torres J.L."/>
            <person name="Peres C."/>
            <person name="Harrison F.H."/>
            <person name="Gibson J."/>
            <person name="Harwood C.S."/>
        </authorList>
    </citation>
    <scope>NUCLEOTIDE SEQUENCE [LARGE SCALE GENOMIC DNA]</scope>
    <source>
        <strain>ATCC BAA-98 / CGA009</strain>
    </source>
</reference>
<proteinExistence type="inferred from homology"/>
<evidence type="ECO:0000255" key="1">
    <source>
        <dbReference type="HAMAP-Rule" id="MF_01382"/>
    </source>
</evidence>
<evidence type="ECO:0000256" key="2">
    <source>
        <dbReference type="SAM" id="MobiDB-lite"/>
    </source>
</evidence>
<name>SECA_RHOPA</name>
<accession>Q6NCG2</accession>
<keyword id="KW-0067">ATP-binding</keyword>
<keyword id="KW-0997">Cell inner membrane</keyword>
<keyword id="KW-1003">Cell membrane</keyword>
<keyword id="KW-0963">Cytoplasm</keyword>
<keyword id="KW-0472">Membrane</keyword>
<keyword id="KW-0479">Metal-binding</keyword>
<keyword id="KW-0547">Nucleotide-binding</keyword>
<keyword id="KW-0653">Protein transport</keyword>
<keyword id="KW-1278">Translocase</keyword>
<keyword id="KW-0811">Translocation</keyword>
<keyword id="KW-0813">Transport</keyword>
<keyword id="KW-0862">Zinc</keyword>
<dbReference type="EC" id="7.4.2.8" evidence="1"/>
<dbReference type="EMBL" id="BX572594">
    <property type="protein sequence ID" value="CAE25954.1"/>
    <property type="molecule type" value="Genomic_DNA"/>
</dbReference>
<dbReference type="RefSeq" id="WP_011156078.1">
    <property type="nucleotide sequence ID" value="NZ_CP116810.1"/>
</dbReference>
<dbReference type="SMR" id="Q6NCG2"/>
<dbReference type="STRING" id="258594.RPA0510"/>
<dbReference type="GeneID" id="66891528"/>
<dbReference type="eggNOG" id="COG0653">
    <property type="taxonomic scope" value="Bacteria"/>
</dbReference>
<dbReference type="HOGENOM" id="CLU_005314_3_0_5"/>
<dbReference type="PhylomeDB" id="Q6NCG2"/>
<dbReference type="GO" id="GO:0031522">
    <property type="term" value="C:cell envelope Sec protein transport complex"/>
    <property type="evidence" value="ECO:0007669"/>
    <property type="project" value="TreeGrafter"/>
</dbReference>
<dbReference type="GO" id="GO:0005829">
    <property type="term" value="C:cytosol"/>
    <property type="evidence" value="ECO:0007669"/>
    <property type="project" value="TreeGrafter"/>
</dbReference>
<dbReference type="GO" id="GO:0005886">
    <property type="term" value="C:plasma membrane"/>
    <property type="evidence" value="ECO:0007669"/>
    <property type="project" value="UniProtKB-SubCell"/>
</dbReference>
<dbReference type="GO" id="GO:0005524">
    <property type="term" value="F:ATP binding"/>
    <property type="evidence" value="ECO:0007669"/>
    <property type="project" value="UniProtKB-UniRule"/>
</dbReference>
<dbReference type="GO" id="GO:0046872">
    <property type="term" value="F:metal ion binding"/>
    <property type="evidence" value="ECO:0007669"/>
    <property type="project" value="UniProtKB-KW"/>
</dbReference>
<dbReference type="GO" id="GO:0008564">
    <property type="term" value="F:protein-exporting ATPase activity"/>
    <property type="evidence" value="ECO:0007669"/>
    <property type="project" value="UniProtKB-EC"/>
</dbReference>
<dbReference type="GO" id="GO:0065002">
    <property type="term" value="P:intracellular protein transmembrane transport"/>
    <property type="evidence" value="ECO:0007669"/>
    <property type="project" value="UniProtKB-UniRule"/>
</dbReference>
<dbReference type="GO" id="GO:0017038">
    <property type="term" value="P:protein import"/>
    <property type="evidence" value="ECO:0007669"/>
    <property type="project" value="InterPro"/>
</dbReference>
<dbReference type="GO" id="GO:0006605">
    <property type="term" value="P:protein targeting"/>
    <property type="evidence" value="ECO:0007669"/>
    <property type="project" value="UniProtKB-UniRule"/>
</dbReference>
<dbReference type="GO" id="GO:0043952">
    <property type="term" value="P:protein transport by the Sec complex"/>
    <property type="evidence" value="ECO:0007669"/>
    <property type="project" value="TreeGrafter"/>
</dbReference>
<dbReference type="CDD" id="cd17928">
    <property type="entry name" value="DEXDc_SecA"/>
    <property type="match status" value="1"/>
</dbReference>
<dbReference type="CDD" id="cd18803">
    <property type="entry name" value="SF2_C_secA"/>
    <property type="match status" value="1"/>
</dbReference>
<dbReference type="FunFam" id="3.40.50.300:FF:000246">
    <property type="entry name" value="Preprotein translocase subunit SecA"/>
    <property type="match status" value="1"/>
</dbReference>
<dbReference type="FunFam" id="3.90.1440.10:FF:000001">
    <property type="entry name" value="Preprotein translocase subunit SecA"/>
    <property type="match status" value="1"/>
</dbReference>
<dbReference type="FunFam" id="1.10.3060.10:FF:000003">
    <property type="entry name" value="Protein translocase subunit SecA"/>
    <property type="match status" value="1"/>
</dbReference>
<dbReference type="FunFam" id="3.40.50.300:FF:000334">
    <property type="entry name" value="Protein translocase subunit SecA"/>
    <property type="match status" value="1"/>
</dbReference>
<dbReference type="FunFam" id="3.40.50.300:FF:001790">
    <property type="entry name" value="Protein translocase subunit SecA"/>
    <property type="match status" value="1"/>
</dbReference>
<dbReference type="Gene3D" id="3.10.450.50">
    <property type="match status" value="1"/>
</dbReference>
<dbReference type="Gene3D" id="1.10.3060.10">
    <property type="entry name" value="Helical scaffold and wing domains of SecA"/>
    <property type="match status" value="1"/>
</dbReference>
<dbReference type="Gene3D" id="3.40.50.300">
    <property type="entry name" value="P-loop containing nucleotide triphosphate hydrolases"/>
    <property type="match status" value="2"/>
</dbReference>
<dbReference type="Gene3D" id="3.90.1440.10">
    <property type="entry name" value="SecA, preprotein cross-linking domain"/>
    <property type="match status" value="1"/>
</dbReference>
<dbReference type="HAMAP" id="MF_01382">
    <property type="entry name" value="SecA"/>
    <property type="match status" value="1"/>
</dbReference>
<dbReference type="InterPro" id="IPR014001">
    <property type="entry name" value="Helicase_ATP-bd"/>
</dbReference>
<dbReference type="InterPro" id="IPR027417">
    <property type="entry name" value="P-loop_NTPase"/>
</dbReference>
<dbReference type="InterPro" id="IPR004027">
    <property type="entry name" value="SEC_C_motif"/>
</dbReference>
<dbReference type="InterPro" id="IPR000185">
    <property type="entry name" value="SecA"/>
</dbReference>
<dbReference type="InterPro" id="IPR020937">
    <property type="entry name" value="SecA_CS"/>
</dbReference>
<dbReference type="InterPro" id="IPR011115">
    <property type="entry name" value="SecA_DEAD"/>
</dbReference>
<dbReference type="InterPro" id="IPR014018">
    <property type="entry name" value="SecA_motor_DEAD"/>
</dbReference>
<dbReference type="InterPro" id="IPR011130">
    <property type="entry name" value="SecA_preprotein_X-link_dom"/>
</dbReference>
<dbReference type="InterPro" id="IPR044722">
    <property type="entry name" value="SecA_SF2_C"/>
</dbReference>
<dbReference type="InterPro" id="IPR011116">
    <property type="entry name" value="SecA_Wing/Scaffold"/>
</dbReference>
<dbReference type="InterPro" id="IPR036266">
    <property type="entry name" value="SecA_Wing/Scaffold_sf"/>
</dbReference>
<dbReference type="InterPro" id="IPR036670">
    <property type="entry name" value="SecA_X-link_sf"/>
</dbReference>
<dbReference type="NCBIfam" id="NF009538">
    <property type="entry name" value="PRK12904.1"/>
    <property type="match status" value="1"/>
</dbReference>
<dbReference type="NCBIfam" id="TIGR00963">
    <property type="entry name" value="secA"/>
    <property type="match status" value="1"/>
</dbReference>
<dbReference type="PANTHER" id="PTHR30612:SF0">
    <property type="entry name" value="CHLOROPLAST PROTEIN-TRANSPORTING ATPASE"/>
    <property type="match status" value="1"/>
</dbReference>
<dbReference type="PANTHER" id="PTHR30612">
    <property type="entry name" value="SECA INNER MEMBRANE COMPONENT OF SEC PROTEIN SECRETION SYSTEM"/>
    <property type="match status" value="1"/>
</dbReference>
<dbReference type="Pfam" id="PF21090">
    <property type="entry name" value="P-loop_SecA"/>
    <property type="match status" value="1"/>
</dbReference>
<dbReference type="Pfam" id="PF02810">
    <property type="entry name" value="SEC-C"/>
    <property type="match status" value="1"/>
</dbReference>
<dbReference type="Pfam" id="PF07517">
    <property type="entry name" value="SecA_DEAD"/>
    <property type="match status" value="1"/>
</dbReference>
<dbReference type="Pfam" id="PF01043">
    <property type="entry name" value="SecA_PP_bind"/>
    <property type="match status" value="1"/>
</dbReference>
<dbReference type="Pfam" id="PF07516">
    <property type="entry name" value="SecA_SW"/>
    <property type="match status" value="1"/>
</dbReference>
<dbReference type="PRINTS" id="PR00906">
    <property type="entry name" value="SECA"/>
</dbReference>
<dbReference type="SMART" id="SM00957">
    <property type="entry name" value="SecA_DEAD"/>
    <property type="match status" value="1"/>
</dbReference>
<dbReference type="SMART" id="SM00958">
    <property type="entry name" value="SecA_PP_bind"/>
    <property type="match status" value="1"/>
</dbReference>
<dbReference type="SUPFAM" id="SSF81886">
    <property type="entry name" value="Helical scaffold and wing domains of SecA"/>
    <property type="match status" value="1"/>
</dbReference>
<dbReference type="SUPFAM" id="SSF52540">
    <property type="entry name" value="P-loop containing nucleoside triphosphate hydrolases"/>
    <property type="match status" value="2"/>
</dbReference>
<dbReference type="SUPFAM" id="SSF81767">
    <property type="entry name" value="Pre-protein crosslinking domain of SecA"/>
    <property type="match status" value="1"/>
</dbReference>
<dbReference type="PROSITE" id="PS01312">
    <property type="entry name" value="SECA"/>
    <property type="match status" value="1"/>
</dbReference>
<dbReference type="PROSITE" id="PS51196">
    <property type="entry name" value="SECA_MOTOR_DEAD"/>
    <property type="match status" value="1"/>
</dbReference>
<organism>
    <name type="scientific">Rhodopseudomonas palustris (strain ATCC BAA-98 / CGA009)</name>
    <dbReference type="NCBI Taxonomy" id="258594"/>
    <lineage>
        <taxon>Bacteria</taxon>
        <taxon>Pseudomonadati</taxon>
        <taxon>Pseudomonadota</taxon>
        <taxon>Alphaproteobacteria</taxon>
        <taxon>Hyphomicrobiales</taxon>
        <taxon>Nitrobacteraceae</taxon>
        <taxon>Rhodopseudomonas</taxon>
    </lineage>
</organism>
<sequence length="946" mass="106711">MIGALARKLFGSANDRRVKGYQTRVAAINALEPEVAALSDEALRARTAEFRAELAAGKTLDDLLVPAFATVREAAKRTLGQRHFDVQLIGGMVLHEGDIAEMKTGEGKTLVATLAVYLNALAGKGVHVVTVNDYLAKRDSGWMGQIYGFLGMTTGVIVHGLDDAQRQAAYACDITYGTNNEYGFDYLRDNMKYRLEDMVQRGHNFAIVDEVDSILIDEARTPLIISGPLDDRSDFYNTIDTFIPRLDKSDYDVDEKQRTVTLTEAGMEKIETLLRDAGQLRGESLYDVENVSVVHHVNQALRAHALFQRDKDYIVRNDEVVIIDEFTGRMMQGRRYSEGLHQALEAKEHVTVQPENQTLASITFQNYFRMYDKLAGMTGTASTEADEFFDIYKLEVVEIPTNLPIARLDEDDEVYRTQQEKYAAILAEVERANKRMQPVLVGTASIEKSEVLAEYLKKNGYKQIDFTDPKGMDKLYAAARAGKPAKLFAVLNARFHEQEAYIVAEAGVPGAITIATNMAGRGTDIKLGGSLEMRIQQEAAHITDEAERAAKITEIKADIERFRDIVLKAEDEIEIEPAKGNKPAKTAKRPGGLYIIGSERHESRRIDNQLRGRSGRQGDPGRSKFFLSLEDDLMRIFGSDKLDTMLTRLGLKEGEAIIHPWINKALEKAQQKVEARNFDIRKNLLKFDDVQNDQRKVIFDQRIELMKEDSVAETVTDMRHTYIEDLVAKYVPEHAYAEQWDVAGLKAEVERVVGLDIPVDEWAKEEGIADEELITRLERVFDEHMAAKVGQWGSDVMRYAEKSILLQTLDHLWREHLVMLDHLRQVIGLRGYGQRDPLQEYKSEAFNLFQEMSSHLREAVTAQLMRVEIIPPDQPQELPPMEVHKMDPDTGQDEMALANVTLAPAQTTDKADRDPNKPETWGKVGRNEDCPCGSGKKYKHCHGRYA</sequence>
<gene>
    <name evidence="1" type="primary">secA</name>
    <name type="ordered locus">RPA0510</name>
</gene>